<reference key="1">
    <citation type="journal article" date="2000" name="Nature">
        <title>The genome sequence of the plant pathogen Xylella fastidiosa.</title>
        <authorList>
            <person name="Simpson A.J.G."/>
            <person name="Reinach F.C."/>
            <person name="Arruda P."/>
            <person name="Abreu F.A."/>
            <person name="Acencio M."/>
            <person name="Alvarenga R."/>
            <person name="Alves L.M.C."/>
            <person name="Araya J.E."/>
            <person name="Baia G.S."/>
            <person name="Baptista C.S."/>
            <person name="Barros M.H."/>
            <person name="Bonaccorsi E.D."/>
            <person name="Bordin S."/>
            <person name="Bove J.M."/>
            <person name="Briones M.R.S."/>
            <person name="Bueno M.R.P."/>
            <person name="Camargo A.A."/>
            <person name="Camargo L.E.A."/>
            <person name="Carraro D.M."/>
            <person name="Carrer H."/>
            <person name="Colauto N.B."/>
            <person name="Colombo C."/>
            <person name="Costa F.F."/>
            <person name="Costa M.C.R."/>
            <person name="Costa-Neto C.M."/>
            <person name="Coutinho L.L."/>
            <person name="Cristofani M."/>
            <person name="Dias-Neto E."/>
            <person name="Docena C."/>
            <person name="El-Dorry H."/>
            <person name="Facincani A.P."/>
            <person name="Ferreira A.J.S."/>
            <person name="Ferreira V.C.A."/>
            <person name="Ferro J.A."/>
            <person name="Fraga J.S."/>
            <person name="Franca S.C."/>
            <person name="Franco M.C."/>
            <person name="Frohme M."/>
            <person name="Furlan L.R."/>
            <person name="Garnier M."/>
            <person name="Goldman G.H."/>
            <person name="Goldman M.H.S."/>
            <person name="Gomes S.L."/>
            <person name="Gruber A."/>
            <person name="Ho P.L."/>
            <person name="Hoheisel J.D."/>
            <person name="Junqueira M.L."/>
            <person name="Kemper E.L."/>
            <person name="Kitajima J.P."/>
            <person name="Krieger J.E."/>
            <person name="Kuramae E.E."/>
            <person name="Laigret F."/>
            <person name="Lambais M.R."/>
            <person name="Leite L.C.C."/>
            <person name="Lemos E.G.M."/>
            <person name="Lemos M.V.F."/>
            <person name="Lopes S.A."/>
            <person name="Lopes C.R."/>
            <person name="Machado J.A."/>
            <person name="Machado M.A."/>
            <person name="Madeira A.M.B.N."/>
            <person name="Madeira H.M.F."/>
            <person name="Marino C.L."/>
            <person name="Marques M.V."/>
            <person name="Martins E.A.L."/>
            <person name="Martins E.M.F."/>
            <person name="Matsukuma A.Y."/>
            <person name="Menck C.F.M."/>
            <person name="Miracca E.C."/>
            <person name="Miyaki C.Y."/>
            <person name="Monteiro-Vitorello C.B."/>
            <person name="Moon D.H."/>
            <person name="Nagai M.A."/>
            <person name="Nascimento A.L.T.O."/>
            <person name="Netto L.E.S."/>
            <person name="Nhani A. Jr."/>
            <person name="Nobrega F.G."/>
            <person name="Nunes L.R."/>
            <person name="Oliveira M.A."/>
            <person name="de Oliveira M.C."/>
            <person name="de Oliveira R.C."/>
            <person name="Palmieri D.A."/>
            <person name="Paris A."/>
            <person name="Peixoto B.R."/>
            <person name="Pereira G.A.G."/>
            <person name="Pereira H.A. Jr."/>
            <person name="Pesquero J.B."/>
            <person name="Quaggio R.B."/>
            <person name="Roberto P.G."/>
            <person name="Rodrigues V."/>
            <person name="de Rosa A.J.M."/>
            <person name="de Rosa V.E. Jr."/>
            <person name="de Sa R.G."/>
            <person name="Santelli R.V."/>
            <person name="Sawasaki H.E."/>
            <person name="da Silva A.C.R."/>
            <person name="da Silva A.M."/>
            <person name="da Silva F.R."/>
            <person name="Silva W.A. Jr."/>
            <person name="da Silveira J.F."/>
            <person name="Silvestri M.L.Z."/>
            <person name="Siqueira W.J."/>
            <person name="de Souza A.A."/>
            <person name="de Souza A.P."/>
            <person name="Terenzi M.F."/>
            <person name="Truffi D."/>
            <person name="Tsai S.M."/>
            <person name="Tsuhako M.H."/>
            <person name="Vallada H."/>
            <person name="Van Sluys M.A."/>
            <person name="Verjovski-Almeida S."/>
            <person name="Vettore A.L."/>
            <person name="Zago M.A."/>
            <person name="Zatz M."/>
            <person name="Meidanis J."/>
            <person name="Setubal J.C."/>
        </authorList>
    </citation>
    <scope>NUCLEOTIDE SEQUENCE [LARGE SCALE GENOMIC DNA]</scope>
    <source>
        <strain>9a5c</strain>
    </source>
</reference>
<feature type="chain" id="PRO_0000313520" description="DNA ligase">
    <location>
        <begin position="1"/>
        <end position="831"/>
    </location>
</feature>
<feature type="domain" description="BRCT" evidence="1">
    <location>
        <begin position="749"/>
        <end position="831"/>
    </location>
</feature>
<feature type="active site" description="N6-AMP-lysine intermediate" evidence="1">
    <location>
        <position position="116"/>
    </location>
</feature>
<feature type="binding site" evidence="1">
    <location>
        <begin position="34"/>
        <end position="38"/>
    </location>
    <ligand>
        <name>NAD(+)</name>
        <dbReference type="ChEBI" id="CHEBI:57540"/>
    </ligand>
</feature>
<feature type="binding site" evidence="1">
    <location>
        <begin position="83"/>
        <end position="84"/>
    </location>
    <ligand>
        <name>NAD(+)</name>
        <dbReference type="ChEBI" id="CHEBI:57540"/>
    </ligand>
</feature>
<feature type="binding site" evidence="1">
    <location>
        <position position="114"/>
    </location>
    <ligand>
        <name>NAD(+)</name>
        <dbReference type="ChEBI" id="CHEBI:57540"/>
    </ligand>
</feature>
<feature type="binding site" evidence="1">
    <location>
        <position position="137"/>
    </location>
    <ligand>
        <name>NAD(+)</name>
        <dbReference type="ChEBI" id="CHEBI:57540"/>
    </ligand>
</feature>
<feature type="binding site" evidence="1">
    <location>
        <position position="174"/>
    </location>
    <ligand>
        <name>NAD(+)</name>
        <dbReference type="ChEBI" id="CHEBI:57540"/>
    </ligand>
</feature>
<feature type="binding site" evidence="1">
    <location>
        <position position="291"/>
    </location>
    <ligand>
        <name>NAD(+)</name>
        <dbReference type="ChEBI" id="CHEBI:57540"/>
    </ligand>
</feature>
<feature type="binding site" evidence="1">
    <location>
        <position position="315"/>
    </location>
    <ligand>
        <name>NAD(+)</name>
        <dbReference type="ChEBI" id="CHEBI:57540"/>
    </ligand>
</feature>
<feature type="binding site" evidence="1">
    <location>
        <position position="409"/>
    </location>
    <ligand>
        <name>Zn(2+)</name>
        <dbReference type="ChEBI" id="CHEBI:29105"/>
    </ligand>
</feature>
<feature type="binding site" evidence="1">
    <location>
        <position position="412"/>
    </location>
    <ligand>
        <name>Zn(2+)</name>
        <dbReference type="ChEBI" id="CHEBI:29105"/>
    </ligand>
</feature>
<feature type="binding site" evidence="1">
    <location>
        <position position="427"/>
    </location>
    <ligand>
        <name>Zn(2+)</name>
        <dbReference type="ChEBI" id="CHEBI:29105"/>
    </ligand>
</feature>
<feature type="binding site" evidence="1">
    <location>
        <position position="433"/>
    </location>
    <ligand>
        <name>Zn(2+)</name>
        <dbReference type="ChEBI" id="CHEBI:29105"/>
    </ligand>
</feature>
<comment type="function">
    <text evidence="1">DNA ligase that catalyzes the formation of phosphodiester linkages between 5'-phosphoryl and 3'-hydroxyl groups in double-stranded DNA using NAD as a coenzyme and as the energy source for the reaction. It is essential for DNA replication and repair of damaged DNA.</text>
</comment>
<comment type="catalytic activity">
    <reaction evidence="1">
        <text>NAD(+) + (deoxyribonucleotide)n-3'-hydroxyl + 5'-phospho-(deoxyribonucleotide)m = (deoxyribonucleotide)n+m + AMP + beta-nicotinamide D-nucleotide.</text>
        <dbReference type="EC" id="6.5.1.2"/>
    </reaction>
</comment>
<comment type="cofactor">
    <cofactor evidence="1">
        <name>Mg(2+)</name>
        <dbReference type="ChEBI" id="CHEBI:18420"/>
    </cofactor>
    <cofactor evidence="1">
        <name>Mn(2+)</name>
        <dbReference type="ChEBI" id="CHEBI:29035"/>
    </cofactor>
</comment>
<comment type="similarity">
    <text evidence="1">Belongs to the NAD-dependent DNA ligase family. LigA subfamily.</text>
</comment>
<comment type="sequence caution" evidence="2">
    <conflict type="erroneous initiation">
        <sequence resource="EMBL-CDS" id="AAF85353"/>
    </conflict>
</comment>
<proteinExistence type="inferred from homology"/>
<dbReference type="EC" id="6.5.1.2" evidence="1"/>
<dbReference type="EMBL" id="AE003849">
    <property type="protein sequence ID" value="AAF85353.1"/>
    <property type="status" value="ALT_INIT"/>
    <property type="molecule type" value="Genomic_DNA"/>
</dbReference>
<dbReference type="PIR" id="G82542">
    <property type="entry name" value="G82542"/>
</dbReference>
<dbReference type="RefSeq" id="WP_010894977.1">
    <property type="nucleotide sequence ID" value="NC_002488.3"/>
</dbReference>
<dbReference type="SMR" id="Q9PAG2"/>
<dbReference type="STRING" id="160492.XF_2556"/>
<dbReference type="KEGG" id="xfa:XF_2556"/>
<dbReference type="PATRIC" id="fig|160492.11.peg.2716"/>
<dbReference type="eggNOG" id="COG0272">
    <property type="taxonomic scope" value="Bacteria"/>
</dbReference>
<dbReference type="HOGENOM" id="CLU_007764_2_2_6"/>
<dbReference type="Proteomes" id="UP000000812">
    <property type="component" value="Chromosome"/>
</dbReference>
<dbReference type="GO" id="GO:0005829">
    <property type="term" value="C:cytosol"/>
    <property type="evidence" value="ECO:0007669"/>
    <property type="project" value="TreeGrafter"/>
</dbReference>
<dbReference type="GO" id="GO:0003911">
    <property type="term" value="F:DNA ligase (NAD+) activity"/>
    <property type="evidence" value="ECO:0007669"/>
    <property type="project" value="UniProtKB-UniRule"/>
</dbReference>
<dbReference type="GO" id="GO:0046872">
    <property type="term" value="F:metal ion binding"/>
    <property type="evidence" value="ECO:0007669"/>
    <property type="project" value="UniProtKB-KW"/>
</dbReference>
<dbReference type="GO" id="GO:0006281">
    <property type="term" value="P:DNA repair"/>
    <property type="evidence" value="ECO:0007669"/>
    <property type="project" value="UniProtKB-KW"/>
</dbReference>
<dbReference type="GO" id="GO:0006260">
    <property type="term" value="P:DNA replication"/>
    <property type="evidence" value="ECO:0007669"/>
    <property type="project" value="UniProtKB-KW"/>
</dbReference>
<dbReference type="CDD" id="cd17748">
    <property type="entry name" value="BRCT_DNA_ligase_like"/>
    <property type="match status" value="1"/>
</dbReference>
<dbReference type="CDD" id="cd00114">
    <property type="entry name" value="LIGANc"/>
    <property type="match status" value="1"/>
</dbReference>
<dbReference type="FunFam" id="1.10.150.20:FF:000006">
    <property type="entry name" value="DNA ligase"/>
    <property type="match status" value="1"/>
</dbReference>
<dbReference type="FunFam" id="1.10.287.610:FF:000002">
    <property type="entry name" value="DNA ligase"/>
    <property type="match status" value="1"/>
</dbReference>
<dbReference type="FunFam" id="2.40.50.140:FF:000012">
    <property type="entry name" value="DNA ligase"/>
    <property type="match status" value="1"/>
</dbReference>
<dbReference type="FunFam" id="3.30.470.30:FF:000001">
    <property type="entry name" value="DNA ligase"/>
    <property type="match status" value="1"/>
</dbReference>
<dbReference type="Gene3D" id="6.20.10.30">
    <property type="match status" value="1"/>
</dbReference>
<dbReference type="Gene3D" id="1.10.150.20">
    <property type="entry name" value="5' to 3' exonuclease, C-terminal subdomain"/>
    <property type="match status" value="3"/>
</dbReference>
<dbReference type="Gene3D" id="3.40.50.10190">
    <property type="entry name" value="BRCT domain"/>
    <property type="match status" value="1"/>
</dbReference>
<dbReference type="Gene3D" id="3.30.470.30">
    <property type="entry name" value="DNA ligase/mRNA capping enzyme"/>
    <property type="match status" value="1"/>
</dbReference>
<dbReference type="Gene3D" id="1.10.287.610">
    <property type="entry name" value="Helix hairpin bin"/>
    <property type="match status" value="1"/>
</dbReference>
<dbReference type="Gene3D" id="2.40.50.140">
    <property type="entry name" value="Nucleic acid-binding proteins"/>
    <property type="match status" value="1"/>
</dbReference>
<dbReference type="HAMAP" id="MF_01588">
    <property type="entry name" value="DNA_ligase_A"/>
    <property type="match status" value="1"/>
</dbReference>
<dbReference type="InterPro" id="IPR001357">
    <property type="entry name" value="BRCT_dom"/>
</dbReference>
<dbReference type="InterPro" id="IPR036420">
    <property type="entry name" value="BRCT_dom_sf"/>
</dbReference>
<dbReference type="InterPro" id="IPR041663">
    <property type="entry name" value="DisA/LigA_HHH"/>
</dbReference>
<dbReference type="InterPro" id="IPR001679">
    <property type="entry name" value="DNA_ligase"/>
</dbReference>
<dbReference type="InterPro" id="IPR018239">
    <property type="entry name" value="DNA_ligase_AS"/>
</dbReference>
<dbReference type="InterPro" id="IPR013839">
    <property type="entry name" value="DNAligase_adenylation"/>
</dbReference>
<dbReference type="InterPro" id="IPR013840">
    <property type="entry name" value="DNAligase_N"/>
</dbReference>
<dbReference type="InterPro" id="IPR012340">
    <property type="entry name" value="NA-bd_OB-fold"/>
</dbReference>
<dbReference type="InterPro" id="IPR004150">
    <property type="entry name" value="NAD_DNA_ligase_OB"/>
</dbReference>
<dbReference type="InterPro" id="IPR010994">
    <property type="entry name" value="RuvA_2-like"/>
</dbReference>
<dbReference type="InterPro" id="IPR004149">
    <property type="entry name" value="Znf_DNAligase_C4"/>
</dbReference>
<dbReference type="NCBIfam" id="TIGR00575">
    <property type="entry name" value="dnlj"/>
    <property type="match status" value="1"/>
</dbReference>
<dbReference type="NCBIfam" id="NF005932">
    <property type="entry name" value="PRK07956.1"/>
    <property type="match status" value="1"/>
</dbReference>
<dbReference type="PANTHER" id="PTHR23389">
    <property type="entry name" value="CHROMOSOME TRANSMISSION FIDELITY FACTOR 18"/>
    <property type="match status" value="1"/>
</dbReference>
<dbReference type="PANTHER" id="PTHR23389:SF9">
    <property type="entry name" value="DNA LIGASE"/>
    <property type="match status" value="1"/>
</dbReference>
<dbReference type="Pfam" id="PF00533">
    <property type="entry name" value="BRCT"/>
    <property type="match status" value="1"/>
</dbReference>
<dbReference type="Pfam" id="PF01653">
    <property type="entry name" value="DNA_ligase_aden"/>
    <property type="match status" value="1"/>
</dbReference>
<dbReference type="Pfam" id="PF03120">
    <property type="entry name" value="DNA_ligase_OB"/>
    <property type="match status" value="1"/>
</dbReference>
<dbReference type="Pfam" id="PF03119">
    <property type="entry name" value="DNA_ligase_ZBD"/>
    <property type="match status" value="1"/>
</dbReference>
<dbReference type="Pfam" id="PF12826">
    <property type="entry name" value="HHH_2"/>
    <property type="match status" value="1"/>
</dbReference>
<dbReference type="PIRSF" id="PIRSF001604">
    <property type="entry name" value="LigA"/>
    <property type="match status" value="1"/>
</dbReference>
<dbReference type="SMART" id="SM00292">
    <property type="entry name" value="BRCT"/>
    <property type="match status" value="1"/>
</dbReference>
<dbReference type="SMART" id="SM00532">
    <property type="entry name" value="LIGANc"/>
    <property type="match status" value="1"/>
</dbReference>
<dbReference type="SUPFAM" id="SSF52113">
    <property type="entry name" value="BRCT domain"/>
    <property type="match status" value="1"/>
</dbReference>
<dbReference type="SUPFAM" id="SSF56091">
    <property type="entry name" value="DNA ligase/mRNA capping enzyme, catalytic domain"/>
    <property type="match status" value="1"/>
</dbReference>
<dbReference type="SUPFAM" id="SSF50249">
    <property type="entry name" value="Nucleic acid-binding proteins"/>
    <property type="match status" value="1"/>
</dbReference>
<dbReference type="SUPFAM" id="SSF47781">
    <property type="entry name" value="RuvA domain 2-like"/>
    <property type="match status" value="2"/>
</dbReference>
<dbReference type="PROSITE" id="PS50172">
    <property type="entry name" value="BRCT"/>
    <property type="match status" value="1"/>
</dbReference>
<dbReference type="PROSITE" id="PS01055">
    <property type="entry name" value="DNA_LIGASE_N1"/>
    <property type="match status" value="1"/>
</dbReference>
<sequence length="831" mass="91497">MIPLDPAQRAAELRCRLQEANYHYHVLDQPRIPDADYDRMLRELDALEAAYPDLATPDSPTQRVGHTIATAFSEVRHTVPMLSLNNAFSDPEVLEFVRRITACLGETAPGFSAEPKLDGLAISLRYQNGIFIQGATRGDGVTGEDVTANLRTLPTIPQRLQSDTWPTVLEVRGEVYMPRPDFEAYNTQARLRGWKVLANPRNGAAGSLRQLDPHITAQRPLSFYAYGIGEVTDDVSFHRHSEILASLRAWGFPVSPLVELVYGSEELLNYYRRMETIRDTLPFDIDGIVYKLDDLSGQREMGFVARAPRWAIAHKFPAQEQTTTVEAIEIQIGRTGAATPVARLTPVQVAGVTVTSATLHNADQIARLDVRIGDTVIVRRAGDVIPEVVTVITDSRPLGATAWSMPMACPVCGSEIVRETGAAVWRCSGELACPAQRKEAIRHFVSRRAMDVEGLGVKCIELLVDAAVVHGVADLYHLSLDQLLRLRLVTNAQTPTMLLREARDHVTGMRYQQLEEILRTVGVDLSGEGDVPKHWQIDVLRAQWPDFDWNHKKIATKWAQNLIAAIDRSRQTTLERFLFALGMTHVGETTAKALAHSFGDLAIIRQLPWPLFKCVPDIGGEVARAIGHFMDQPANQQAIDDLVERGVRITDTHPPTSTLRDQLTLASLLEHLDIPKITPLRAVQLAALAPTLPLLAEAALDTLLQAGVSQPAAQSLTEWFQSPDNISLARRLQHCCDVLLAQLPSADRAHTAPLNGQSVVLTGKLASLTREAAATRLEMLGAKIVGSVSKKTSFLVAGEDPGSKLDKAHALHVDIWDEARLLAFLGQYSAQ</sequence>
<protein>
    <recommendedName>
        <fullName evidence="1">DNA ligase</fullName>
        <ecNumber evidence="1">6.5.1.2</ecNumber>
    </recommendedName>
    <alternativeName>
        <fullName evidence="1">Polydeoxyribonucleotide synthase [NAD(+)]</fullName>
    </alternativeName>
</protein>
<keyword id="KW-0227">DNA damage</keyword>
<keyword id="KW-0234">DNA repair</keyword>
<keyword id="KW-0235">DNA replication</keyword>
<keyword id="KW-0436">Ligase</keyword>
<keyword id="KW-0460">Magnesium</keyword>
<keyword id="KW-0464">Manganese</keyword>
<keyword id="KW-0479">Metal-binding</keyword>
<keyword id="KW-0520">NAD</keyword>
<keyword id="KW-0862">Zinc</keyword>
<organism>
    <name type="scientific">Xylella fastidiosa (strain 9a5c)</name>
    <dbReference type="NCBI Taxonomy" id="160492"/>
    <lineage>
        <taxon>Bacteria</taxon>
        <taxon>Pseudomonadati</taxon>
        <taxon>Pseudomonadota</taxon>
        <taxon>Gammaproteobacteria</taxon>
        <taxon>Lysobacterales</taxon>
        <taxon>Lysobacteraceae</taxon>
        <taxon>Xylella</taxon>
    </lineage>
</organism>
<name>DNLJ_XYLFA</name>
<accession>Q9PAG2</accession>
<evidence type="ECO:0000255" key="1">
    <source>
        <dbReference type="HAMAP-Rule" id="MF_01588"/>
    </source>
</evidence>
<evidence type="ECO:0000305" key="2"/>
<gene>
    <name evidence="1" type="primary">ligA</name>
    <name type="ordered locus">XF_2556</name>
</gene>